<proteinExistence type="inferred from homology"/>
<feature type="chain" id="PRO_0000350871" description="Scarecrow-like protein 34">
    <location>
        <begin position="1"/>
        <end position="630"/>
    </location>
</feature>
<feature type="domain" description="GRAS" evidence="2">
    <location>
        <begin position="240"/>
        <end position="628"/>
    </location>
</feature>
<feature type="region of interest" description="Leucine repeat I (LRI)" evidence="2">
    <location>
        <begin position="247"/>
        <end position="312"/>
    </location>
</feature>
<feature type="region of interest" description="VHIID" evidence="2">
    <location>
        <begin position="331"/>
        <end position="396"/>
    </location>
</feature>
<feature type="region of interest" description="Leucine repeat II (LRII)" evidence="2">
    <location>
        <begin position="412"/>
        <end position="444"/>
    </location>
</feature>
<feature type="region of interest" description="PFYRE" evidence="2">
    <location>
        <begin position="454"/>
        <end position="549"/>
    </location>
</feature>
<feature type="region of interest" description="SAW" evidence="2">
    <location>
        <begin position="552"/>
        <end position="628"/>
    </location>
</feature>
<feature type="short sequence motif" description="VHIID" evidence="2">
    <location>
        <begin position="362"/>
        <end position="366"/>
    </location>
</feature>
<keyword id="KW-0539">Nucleus</keyword>
<keyword id="KW-1185">Reference proteome</keyword>
<keyword id="KW-0804">Transcription</keyword>
<keyword id="KW-0805">Transcription regulation</keyword>
<comment type="function">
    <text evidence="1">Probable transcription factor involved in plant development.</text>
</comment>
<comment type="subcellular location">
    <subcellularLocation>
        <location evidence="3">Nucleus</location>
    </subcellularLocation>
</comment>
<comment type="similarity">
    <text evidence="3">Belongs to the GRAS family.</text>
</comment>
<comment type="sequence caution" evidence="3">
    <conflict type="erroneous gene model prediction">
        <sequence resource="EMBL-CDS" id="AAC33232"/>
    </conflict>
    <text>The predicted gene At2g29060 has been split into 2 genes: At2g29060 and At2g29065.</text>
</comment>
<evidence type="ECO:0000250" key="1"/>
<evidence type="ECO:0000255" key="2">
    <source>
        <dbReference type="PROSITE-ProRule" id="PRU01191"/>
    </source>
</evidence>
<evidence type="ECO:0000305" key="3"/>
<protein>
    <recommendedName>
        <fullName>Scarecrow-like protein 34</fullName>
        <shortName>AtSCL34</shortName>
    </recommendedName>
    <alternativeName>
        <fullName>GRAS family protein 12</fullName>
        <shortName>AtGRAS-12</shortName>
    </alternativeName>
</protein>
<gene>
    <name type="primary">SCL34</name>
    <name type="ordered locus">At2g29065</name>
    <name type="ORF">T9I4.14</name>
</gene>
<sequence length="630" mass="72529">MDPNFSESLNGFEYFDGNPNLLTDPMEDQYPPPSDTLLKYVSEILMEESNGDYKQSMFYDSLALRKTEEMLQQVITDSQNQSFSPADSLITNSWDASGSIDESAYSADPQPVNEIMVKSMFSDAESALQFKKGVEEASKFLPNSDQWVINLDIERSERRDSVKEEMGLDQLRVKKNHERDFEEVRSSKQFASNVEDSKVTDMFDKVLLLDGECDPQTLLDSEIQAIRSSKNIGEKGKKKKKKKSQVVDFRTLLTHCAQAISTGDKTTALEFLLQIRQQSSPLGDAGQRLAHCFANALEARLQGSTGPMIQTYYNALTSSLKDTAADTIRAYRVYLSSSPFVTLMYFFSIWMILDVAKDAPVLHIVDFGILYGFQWPMFIQSISDRKDVPRKLRITGIELPQCGFRPAERIEETGRRLAEYCKRFNVPFEYKAIASQNWETIRIEDLDIRPNEVLAVNAGLRLKNLQDETGSEENCPRDAVLKLIRNMNPDVFIHAIVNGSFNAPFFISRFKEAVYHYSALFDMFDSTLPRDNKERIRFEREFYGREAMNVIACEEADRVERPETYRQWQVRMVRAGFKQKTIKPELVELFRGKLKKWRYHKDFVVDENSKWLLQGWKGRTLYASSCWVPA</sequence>
<reference key="1">
    <citation type="journal article" date="1999" name="Nature">
        <title>Sequence and analysis of chromosome 2 of the plant Arabidopsis thaliana.</title>
        <authorList>
            <person name="Lin X."/>
            <person name="Kaul S."/>
            <person name="Rounsley S.D."/>
            <person name="Shea T.P."/>
            <person name="Benito M.-I."/>
            <person name="Town C.D."/>
            <person name="Fujii C.Y."/>
            <person name="Mason T.M."/>
            <person name="Bowman C.L."/>
            <person name="Barnstead M.E."/>
            <person name="Feldblyum T.V."/>
            <person name="Buell C.R."/>
            <person name="Ketchum K.A."/>
            <person name="Lee J.J."/>
            <person name="Ronning C.M."/>
            <person name="Koo H.L."/>
            <person name="Moffat K.S."/>
            <person name="Cronin L.A."/>
            <person name="Shen M."/>
            <person name="Pai G."/>
            <person name="Van Aken S."/>
            <person name="Umayam L."/>
            <person name="Tallon L.J."/>
            <person name="Gill J.E."/>
            <person name="Adams M.D."/>
            <person name="Carrera A.J."/>
            <person name="Creasy T.H."/>
            <person name="Goodman H.M."/>
            <person name="Somerville C.R."/>
            <person name="Copenhaver G.P."/>
            <person name="Preuss D."/>
            <person name="Nierman W.C."/>
            <person name="White O."/>
            <person name="Eisen J.A."/>
            <person name="Salzberg S.L."/>
            <person name="Fraser C.M."/>
            <person name="Venter J.C."/>
        </authorList>
    </citation>
    <scope>NUCLEOTIDE SEQUENCE [LARGE SCALE GENOMIC DNA]</scope>
    <source>
        <strain>cv. Columbia</strain>
    </source>
</reference>
<reference key="2">
    <citation type="journal article" date="2017" name="Plant J.">
        <title>Araport11: a complete reannotation of the Arabidopsis thaliana reference genome.</title>
        <authorList>
            <person name="Cheng C.Y."/>
            <person name="Krishnakumar V."/>
            <person name="Chan A.P."/>
            <person name="Thibaud-Nissen F."/>
            <person name="Schobel S."/>
            <person name="Town C.D."/>
        </authorList>
    </citation>
    <scope>GENOME REANNOTATION</scope>
    <source>
        <strain>cv. Columbia</strain>
    </source>
</reference>
<reference key="3">
    <citation type="journal article" date="2004" name="Plant Mol. Biol.">
        <title>Genome-wide analysis of the GRAS gene family in rice and Arabidopsis.</title>
        <authorList>
            <person name="Tian C."/>
            <person name="Wan P."/>
            <person name="Sun S."/>
            <person name="Li J."/>
            <person name="Chen M."/>
        </authorList>
    </citation>
    <scope>GENE FAMILY</scope>
</reference>
<reference key="4">
    <citation type="journal article" date="2008" name="Plant Mol. Biol.">
        <title>Large-scale analysis of the GRAS gene family in Arabidopsis thaliana.</title>
        <authorList>
            <person name="Lee M.-H."/>
            <person name="Kim B."/>
            <person name="Song S.-K."/>
            <person name="Heo J.-O."/>
            <person name="Yu N.-I."/>
            <person name="Lee S.A."/>
            <person name="Kim M."/>
            <person name="Kim D.G."/>
            <person name="Sohn S.O."/>
            <person name="Lim C.E."/>
            <person name="Chang K.S."/>
            <person name="Lee M.M."/>
            <person name="Lim J."/>
        </authorList>
    </citation>
    <scope>GENE FAMILY</scope>
</reference>
<dbReference type="EMBL" id="AC005315">
    <property type="protein sequence ID" value="AAC33232.1"/>
    <property type="status" value="ALT_SEQ"/>
    <property type="molecule type" value="Genomic_DNA"/>
</dbReference>
<dbReference type="EMBL" id="CP002685">
    <property type="protein sequence ID" value="AEC08205.1"/>
    <property type="molecule type" value="Genomic_DNA"/>
</dbReference>
<dbReference type="PIR" id="T02736">
    <property type="entry name" value="T02736"/>
</dbReference>
<dbReference type="RefSeq" id="NP_001189628.1">
    <property type="nucleotide sequence ID" value="NM_001202699.2"/>
</dbReference>
<dbReference type="SMR" id="P0C884"/>
<dbReference type="FunCoup" id="P0C884">
    <property type="interactions" value="21"/>
</dbReference>
<dbReference type="STRING" id="3702.P0C884"/>
<dbReference type="PaxDb" id="3702-AT2G29065.1"/>
<dbReference type="ProteomicsDB" id="232811"/>
<dbReference type="EnsemblPlants" id="AT2G29065.1">
    <property type="protein sequence ID" value="AT2G29065.1"/>
    <property type="gene ID" value="AT2G29065"/>
</dbReference>
<dbReference type="GeneID" id="10723125"/>
<dbReference type="Gramene" id="AT2G29065.1">
    <property type="protein sequence ID" value="AT2G29065.1"/>
    <property type="gene ID" value="AT2G29065"/>
</dbReference>
<dbReference type="KEGG" id="ath:AT2G29065"/>
<dbReference type="Araport" id="AT2G29065"/>
<dbReference type="TAIR" id="AT2G29065"/>
<dbReference type="eggNOG" id="ENOG502QSQ6">
    <property type="taxonomic scope" value="Eukaryota"/>
</dbReference>
<dbReference type="HOGENOM" id="CLU_011924_2_2_1"/>
<dbReference type="InParanoid" id="P0C884"/>
<dbReference type="OMA" id="CCNDNEN"/>
<dbReference type="PRO" id="PR:P0C884"/>
<dbReference type="Proteomes" id="UP000006548">
    <property type="component" value="Chromosome 2"/>
</dbReference>
<dbReference type="ExpressionAtlas" id="P0C884">
    <property type="expression patterns" value="baseline and differential"/>
</dbReference>
<dbReference type="GO" id="GO:0005634">
    <property type="term" value="C:nucleus"/>
    <property type="evidence" value="ECO:0007669"/>
    <property type="project" value="UniProtKB-SubCell"/>
</dbReference>
<dbReference type="InterPro" id="IPR005202">
    <property type="entry name" value="TF_GRAS"/>
</dbReference>
<dbReference type="PANTHER" id="PTHR31636">
    <property type="entry name" value="OSJNBA0084A10.13 PROTEIN-RELATED"/>
    <property type="match status" value="1"/>
</dbReference>
<dbReference type="Pfam" id="PF03514">
    <property type="entry name" value="GRAS"/>
    <property type="match status" value="1"/>
</dbReference>
<dbReference type="PROSITE" id="PS50985">
    <property type="entry name" value="GRAS"/>
    <property type="match status" value="1"/>
</dbReference>
<name>SCL34_ARATH</name>
<organism>
    <name type="scientific">Arabidopsis thaliana</name>
    <name type="common">Mouse-ear cress</name>
    <dbReference type="NCBI Taxonomy" id="3702"/>
    <lineage>
        <taxon>Eukaryota</taxon>
        <taxon>Viridiplantae</taxon>
        <taxon>Streptophyta</taxon>
        <taxon>Embryophyta</taxon>
        <taxon>Tracheophyta</taxon>
        <taxon>Spermatophyta</taxon>
        <taxon>Magnoliopsida</taxon>
        <taxon>eudicotyledons</taxon>
        <taxon>Gunneridae</taxon>
        <taxon>Pentapetalae</taxon>
        <taxon>rosids</taxon>
        <taxon>malvids</taxon>
        <taxon>Brassicales</taxon>
        <taxon>Brassicaceae</taxon>
        <taxon>Camelineae</taxon>
        <taxon>Arabidopsis</taxon>
    </lineage>
</organism>
<accession>P0C884</accession>
<accession>O81074</accession>